<name>RL10_MARN8</name>
<keyword id="KW-0687">Ribonucleoprotein</keyword>
<keyword id="KW-0689">Ribosomal protein</keyword>
<keyword id="KW-0694">RNA-binding</keyword>
<keyword id="KW-0699">rRNA-binding</keyword>
<dbReference type="EMBL" id="CP000514">
    <property type="protein sequence ID" value="ABM17807.1"/>
    <property type="molecule type" value="Genomic_DNA"/>
</dbReference>
<dbReference type="RefSeq" id="WP_011784239.1">
    <property type="nucleotide sequence ID" value="NC_008740.1"/>
</dbReference>
<dbReference type="SMR" id="A1TYI8"/>
<dbReference type="STRING" id="351348.Maqu_0710"/>
<dbReference type="KEGG" id="maq:Maqu_0710"/>
<dbReference type="eggNOG" id="COG0244">
    <property type="taxonomic scope" value="Bacteria"/>
</dbReference>
<dbReference type="HOGENOM" id="CLU_092227_0_1_6"/>
<dbReference type="OrthoDB" id="9808307at2"/>
<dbReference type="Proteomes" id="UP000000998">
    <property type="component" value="Chromosome"/>
</dbReference>
<dbReference type="GO" id="GO:1990904">
    <property type="term" value="C:ribonucleoprotein complex"/>
    <property type="evidence" value="ECO:0007669"/>
    <property type="project" value="UniProtKB-KW"/>
</dbReference>
<dbReference type="GO" id="GO:0005840">
    <property type="term" value="C:ribosome"/>
    <property type="evidence" value="ECO:0007669"/>
    <property type="project" value="UniProtKB-KW"/>
</dbReference>
<dbReference type="GO" id="GO:0070180">
    <property type="term" value="F:large ribosomal subunit rRNA binding"/>
    <property type="evidence" value="ECO:0007669"/>
    <property type="project" value="UniProtKB-UniRule"/>
</dbReference>
<dbReference type="GO" id="GO:0006412">
    <property type="term" value="P:translation"/>
    <property type="evidence" value="ECO:0007669"/>
    <property type="project" value="UniProtKB-UniRule"/>
</dbReference>
<dbReference type="CDD" id="cd05797">
    <property type="entry name" value="Ribosomal_L10"/>
    <property type="match status" value="1"/>
</dbReference>
<dbReference type="FunFam" id="3.30.70.1730:FF:000001">
    <property type="entry name" value="50S ribosomal protein L10"/>
    <property type="match status" value="1"/>
</dbReference>
<dbReference type="Gene3D" id="3.30.70.1730">
    <property type="match status" value="1"/>
</dbReference>
<dbReference type="Gene3D" id="6.10.250.290">
    <property type="match status" value="1"/>
</dbReference>
<dbReference type="HAMAP" id="MF_00362">
    <property type="entry name" value="Ribosomal_uL10"/>
    <property type="match status" value="1"/>
</dbReference>
<dbReference type="InterPro" id="IPR001790">
    <property type="entry name" value="Ribosomal_uL10"/>
</dbReference>
<dbReference type="InterPro" id="IPR043141">
    <property type="entry name" value="Ribosomal_uL10-like_sf"/>
</dbReference>
<dbReference type="InterPro" id="IPR022973">
    <property type="entry name" value="Ribosomal_uL10_bac"/>
</dbReference>
<dbReference type="InterPro" id="IPR047865">
    <property type="entry name" value="Ribosomal_uL10_bac_type"/>
</dbReference>
<dbReference type="NCBIfam" id="NF000955">
    <property type="entry name" value="PRK00099.1-1"/>
    <property type="match status" value="1"/>
</dbReference>
<dbReference type="PANTHER" id="PTHR11560">
    <property type="entry name" value="39S RIBOSOMAL PROTEIN L10, MITOCHONDRIAL"/>
    <property type="match status" value="1"/>
</dbReference>
<dbReference type="Pfam" id="PF00466">
    <property type="entry name" value="Ribosomal_L10"/>
    <property type="match status" value="1"/>
</dbReference>
<dbReference type="SUPFAM" id="SSF160369">
    <property type="entry name" value="Ribosomal protein L10-like"/>
    <property type="match status" value="1"/>
</dbReference>
<sequence>MAIRLEDKKAIVAEVNETAGAALSVVLADYRGVTSGDMTALRAKARAENVRLKVVRNNLAKIAIRGTEFECIDPALVGPTILAFSMEDPGAAARLLKDFAKEKEAFEIKGLAVGGELMGAEQIDRLATLPTLHEALTKLAIVTQAPVTKLARTLNDIPGRITRVVAAVRDQKQDAA</sequence>
<evidence type="ECO:0000255" key="1">
    <source>
        <dbReference type="HAMAP-Rule" id="MF_00362"/>
    </source>
</evidence>
<evidence type="ECO:0000305" key="2"/>
<organism>
    <name type="scientific">Marinobacter nauticus (strain ATCC 700491 / DSM 11845 / VT8)</name>
    <name type="common">Marinobacter aquaeolei</name>
    <dbReference type="NCBI Taxonomy" id="351348"/>
    <lineage>
        <taxon>Bacteria</taxon>
        <taxon>Pseudomonadati</taxon>
        <taxon>Pseudomonadota</taxon>
        <taxon>Gammaproteobacteria</taxon>
        <taxon>Pseudomonadales</taxon>
        <taxon>Marinobacteraceae</taxon>
        <taxon>Marinobacter</taxon>
    </lineage>
</organism>
<proteinExistence type="inferred from homology"/>
<protein>
    <recommendedName>
        <fullName evidence="1">Large ribosomal subunit protein uL10</fullName>
    </recommendedName>
    <alternativeName>
        <fullName evidence="2">50S ribosomal protein L10</fullName>
    </alternativeName>
</protein>
<accession>A1TYI8</accession>
<comment type="function">
    <text evidence="1">Forms part of the ribosomal stalk, playing a central role in the interaction of the ribosome with GTP-bound translation factors.</text>
</comment>
<comment type="subunit">
    <text evidence="1">Part of the ribosomal stalk of the 50S ribosomal subunit. The N-terminus interacts with L11 and the large rRNA to form the base of the stalk. The C-terminus forms an elongated spine to which L12 dimers bind in a sequential fashion forming a multimeric L10(L12)X complex.</text>
</comment>
<comment type="similarity">
    <text evidence="1">Belongs to the universal ribosomal protein uL10 family.</text>
</comment>
<feature type="chain" id="PRO_1000005529" description="Large ribosomal subunit protein uL10">
    <location>
        <begin position="1"/>
        <end position="176"/>
    </location>
</feature>
<gene>
    <name evidence="1" type="primary">rplJ</name>
    <name type="ordered locus">Maqu_0710</name>
</gene>
<reference key="1">
    <citation type="journal article" date="2011" name="Appl. Environ. Microbiol.">
        <title>Genomic potential of Marinobacter aquaeolei, a biogeochemical 'opportunitroph'.</title>
        <authorList>
            <person name="Singer E."/>
            <person name="Webb E.A."/>
            <person name="Nelson W.C."/>
            <person name="Heidelberg J.F."/>
            <person name="Ivanova N."/>
            <person name="Pati A."/>
            <person name="Edwards K.J."/>
        </authorList>
    </citation>
    <scope>NUCLEOTIDE SEQUENCE [LARGE SCALE GENOMIC DNA]</scope>
    <source>
        <strain>ATCC 700491 / DSM 11845 / VT8</strain>
    </source>
</reference>